<proteinExistence type="predicted"/>
<gene>
    <name type="ordered locus">HI_0487</name>
</gene>
<dbReference type="EMBL" id="L42023">
    <property type="protein sequence ID" value="AAC22157.1"/>
    <property type="molecule type" value="Genomic_DNA"/>
</dbReference>
<dbReference type="PIR" id="C64008">
    <property type="entry name" value="C64008"/>
</dbReference>
<dbReference type="RefSeq" id="NP_438648.1">
    <property type="nucleotide sequence ID" value="NC_000907.1"/>
</dbReference>
<dbReference type="SMR" id="P44003"/>
<dbReference type="STRING" id="71421.HI_0487"/>
<dbReference type="EnsemblBacteria" id="AAC22157">
    <property type="protein sequence ID" value="AAC22157"/>
    <property type="gene ID" value="HI_0487"/>
</dbReference>
<dbReference type="KEGG" id="hin:HI_0487"/>
<dbReference type="PATRIC" id="fig|71421.8.peg.507"/>
<dbReference type="eggNOG" id="ENOG5031K84">
    <property type="taxonomic scope" value="Bacteria"/>
</dbReference>
<dbReference type="HOGENOM" id="CLU_146117_0_0_6"/>
<dbReference type="OrthoDB" id="5688967at2"/>
<dbReference type="BioCyc" id="HINF71421:G1GJ1-503-MONOMER"/>
<dbReference type="Proteomes" id="UP000000579">
    <property type="component" value="Chromosome"/>
</dbReference>
<dbReference type="GO" id="GO:0006355">
    <property type="term" value="P:regulation of DNA-templated transcription"/>
    <property type="evidence" value="ECO:0007669"/>
    <property type="project" value="InterPro"/>
</dbReference>
<dbReference type="InterPro" id="IPR011608">
    <property type="entry name" value="PRD"/>
</dbReference>
<dbReference type="InterPro" id="IPR036634">
    <property type="entry name" value="PRD_sf"/>
</dbReference>
<dbReference type="Pfam" id="PF00874">
    <property type="entry name" value="PRD"/>
    <property type="match status" value="1"/>
</dbReference>
<dbReference type="SUPFAM" id="SSF63520">
    <property type="entry name" value="PTS-regulatory domain, PRD"/>
    <property type="match status" value="1"/>
</dbReference>
<dbReference type="PROSITE" id="PS51372">
    <property type="entry name" value="PRD_2"/>
    <property type="match status" value="1"/>
</dbReference>
<feature type="chain" id="PRO_0000169535" description="Uncharacterized protein HI_0487">
    <location>
        <begin position="1"/>
        <end position="125"/>
    </location>
</feature>
<feature type="domain" description="PRD" evidence="1">
    <location>
        <begin position="15"/>
        <end position="121"/>
    </location>
</feature>
<name>Y487_HAEIN</name>
<keyword id="KW-1185">Reference proteome</keyword>
<organism>
    <name type="scientific">Haemophilus influenzae (strain ATCC 51907 / DSM 11121 / KW20 / Rd)</name>
    <dbReference type="NCBI Taxonomy" id="71421"/>
    <lineage>
        <taxon>Bacteria</taxon>
        <taxon>Pseudomonadati</taxon>
        <taxon>Pseudomonadota</taxon>
        <taxon>Gammaproteobacteria</taxon>
        <taxon>Pasteurellales</taxon>
        <taxon>Pasteurellaceae</taxon>
        <taxon>Haemophilus</taxon>
    </lineage>
</organism>
<protein>
    <recommendedName>
        <fullName>Uncharacterized protein HI_0487</fullName>
    </recommendedName>
</protein>
<reference key="1">
    <citation type="journal article" date="1995" name="Science">
        <title>Whole-genome random sequencing and assembly of Haemophilus influenzae Rd.</title>
        <authorList>
            <person name="Fleischmann R.D."/>
            <person name="Adams M.D."/>
            <person name="White O."/>
            <person name="Clayton R.A."/>
            <person name="Kirkness E.F."/>
            <person name="Kerlavage A.R."/>
            <person name="Bult C.J."/>
            <person name="Tomb J.-F."/>
            <person name="Dougherty B.A."/>
            <person name="Merrick J.M."/>
            <person name="McKenney K."/>
            <person name="Sutton G.G."/>
            <person name="FitzHugh W."/>
            <person name="Fields C.A."/>
            <person name="Gocayne J.D."/>
            <person name="Scott J.D."/>
            <person name="Shirley R."/>
            <person name="Liu L.-I."/>
            <person name="Glodek A."/>
            <person name="Kelley J.M."/>
            <person name="Weidman J.F."/>
            <person name="Phillips C.A."/>
            <person name="Spriggs T."/>
            <person name="Hedblom E."/>
            <person name="Cotton M.D."/>
            <person name="Utterback T.R."/>
            <person name="Hanna M.C."/>
            <person name="Nguyen D.T."/>
            <person name="Saudek D.M."/>
            <person name="Brandon R.C."/>
            <person name="Fine L.D."/>
            <person name="Fritchman J.L."/>
            <person name="Fuhrmann J.L."/>
            <person name="Geoghagen N.S.M."/>
            <person name="Gnehm C.L."/>
            <person name="McDonald L.A."/>
            <person name="Small K.V."/>
            <person name="Fraser C.M."/>
            <person name="Smith H.O."/>
            <person name="Venter J.C."/>
        </authorList>
    </citation>
    <scope>NUCLEOTIDE SEQUENCE [LARGE SCALE GENOMIC DNA]</scope>
    <source>
        <strain>ATCC 51907 / DSM 11121 / KW20 / Rd</strain>
    </source>
</reference>
<accession>P44003</accession>
<evidence type="ECO:0000255" key="1">
    <source>
        <dbReference type="PROSITE-ProRule" id="PRU00704"/>
    </source>
</evidence>
<sequence length="125" mass="14737">MRLFKQLERWKIRRQINQSIIDVIFRLRDRLAHYWQADVNTPQVDFMLLHIACSLGRIERGGCVSSLYSEMLEEMQSAVIFPQVLAIHQDLLKLMPFSIPEAEQTYFLANIHSLVLEQKQLKPLK</sequence>